<proteinExistence type="evidence at transcript level"/>
<name>ATPA_PONAB</name>
<accession>Q5R546</accession>
<protein>
    <recommendedName>
        <fullName evidence="4">ATP synthase F(1) complex subunit alpha, mitochondrial</fullName>
    </recommendedName>
    <alternativeName>
        <fullName evidence="4">ATP synthase F1 subunit alpha</fullName>
    </alternativeName>
</protein>
<gene>
    <name evidence="4" type="primary">ATP5F1A</name>
    <name type="synonym">ATP5A1</name>
</gene>
<organism>
    <name type="scientific">Pongo abelii</name>
    <name type="common">Sumatran orangutan</name>
    <name type="synonym">Pongo pygmaeus abelii</name>
    <dbReference type="NCBI Taxonomy" id="9601"/>
    <lineage>
        <taxon>Eukaryota</taxon>
        <taxon>Metazoa</taxon>
        <taxon>Chordata</taxon>
        <taxon>Craniata</taxon>
        <taxon>Vertebrata</taxon>
        <taxon>Euteleostomi</taxon>
        <taxon>Mammalia</taxon>
        <taxon>Eutheria</taxon>
        <taxon>Euarchontoglires</taxon>
        <taxon>Primates</taxon>
        <taxon>Haplorrhini</taxon>
        <taxon>Catarrhini</taxon>
        <taxon>Hominidae</taxon>
        <taxon>Pongo</taxon>
    </lineage>
</organism>
<reference key="1">
    <citation type="submission" date="2004-11" db="EMBL/GenBank/DDBJ databases">
        <authorList>
            <consortium name="The German cDNA consortium"/>
        </authorList>
    </citation>
    <scope>NUCLEOTIDE SEQUENCE [LARGE SCALE MRNA]</scope>
    <source>
        <tissue>Liver</tissue>
    </source>
</reference>
<sequence length="553" mass="59781">MLSVRVAAAVVRALPRRAGLVSRNALGSSFIAARNFHASNTHLQKTGTAEMSSILEERILGADTSVDLEETGRVLSIGDGIARVHGLRNVQAEEMVEFSSGLKGMSLNLEPDNVGVVVFGNDKLIKEGDIVKRTGAIVDVPVGEELLGRVVDALGNAIDGKGPISSKTRRRVGLKAPGIIPRISVREPMQTGIKAVDSLVPIGRGQRELIIGDRQTGKTSIAIDTIINQKRFNDGSDEKKKLYCIYVAIGQKRSTVAQLVKRLTDADAMKYTIVVSATASDAAPLQYLAPYSGCSMGEYFRDNGKHALIIYDDLSKQAVAYRQMSLLLRRPPGREAYPGDVFYLHSRLLERAAKMNDAFGGGSLTALPVIETQAGDVSAYIPTNVISITDGQIFLETELFYKGIRPAINVGLSVSRVGSAAQTRAMKQVAGTMKLELAQYREVAAFAQFGSDLDAATQQLLSRGVRLTELLKQGQYSPMAIEEQVAVIYAGVRGYLDKLEPSKITKFENAFLSHVVSQHQALLGTIRADGKISEQSDAKLKEIVTNFLAGFEA</sequence>
<dbReference type="EMBL" id="CR861028">
    <property type="protein sequence ID" value="CAH93120.1"/>
    <property type="molecule type" value="mRNA"/>
</dbReference>
<dbReference type="RefSeq" id="NP_001126846.1">
    <property type="nucleotide sequence ID" value="NM_001133374.1"/>
</dbReference>
<dbReference type="SMR" id="Q5R546"/>
<dbReference type="FunCoup" id="Q5R546">
    <property type="interactions" value="1842"/>
</dbReference>
<dbReference type="STRING" id="9601.ENSPPYP00000010258"/>
<dbReference type="GlyCosmos" id="Q5R546">
    <property type="glycosylation" value="1 site, No reported glycans"/>
</dbReference>
<dbReference type="Ensembl" id="ENSPPYT00000010663.2">
    <property type="protein sequence ID" value="ENSPPYP00000010258.2"/>
    <property type="gene ID" value="ENSPPYG00000009130.3"/>
</dbReference>
<dbReference type="GeneID" id="100173854"/>
<dbReference type="KEGG" id="pon:100173854"/>
<dbReference type="CTD" id="498"/>
<dbReference type="eggNOG" id="KOG1353">
    <property type="taxonomic scope" value="Eukaryota"/>
</dbReference>
<dbReference type="GeneTree" id="ENSGT00550000074846"/>
<dbReference type="InParanoid" id="Q5R546"/>
<dbReference type="OMA" id="INQRDNW"/>
<dbReference type="OrthoDB" id="9805536at2759"/>
<dbReference type="Proteomes" id="UP000001595">
    <property type="component" value="Chromosome 18"/>
</dbReference>
<dbReference type="GO" id="GO:0005743">
    <property type="term" value="C:mitochondrial inner membrane"/>
    <property type="evidence" value="ECO:0007669"/>
    <property type="project" value="UniProtKB-SubCell"/>
</dbReference>
<dbReference type="GO" id="GO:0005886">
    <property type="term" value="C:plasma membrane"/>
    <property type="evidence" value="ECO:0007669"/>
    <property type="project" value="UniProtKB-SubCell"/>
</dbReference>
<dbReference type="GO" id="GO:0045259">
    <property type="term" value="C:proton-transporting ATP synthase complex"/>
    <property type="evidence" value="ECO:0000250"/>
    <property type="project" value="UniProtKB"/>
</dbReference>
<dbReference type="GO" id="GO:0043531">
    <property type="term" value="F:ADP binding"/>
    <property type="evidence" value="ECO:0007669"/>
    <property type="project" value="TreeGrafter"/>
</dbReference>
<dbReference type="GO" id="GO:0043532">
    <property type="term" value="F:angiostatin binding"/>
    <property type="evidence" value="ECO:0007669"/>
    <property type="project" value="Ensembl"/>
</dbReference>
<dbReference type="GO" id="GO:0005524">
    <property type="term" value="F:ATP binding"/>
    <property type="evidence" value="ECO:0007669"/>
    <property type="project" value="UniProtKB-KW"/>
</dbReference>
<dbReference type="GO" id="GO:0042288">
    <property type="term" value="F:MHC class I protein binding"/>
    <property type="evidence" value="ECO:0007669"/>
    <property type="project" value="Ensembl"/>
</dbReference>
<dbReference type="GO" id="GO:0046933">
    <property type="term" value="F:proton-transporting ATP synthase activity, rotational mechanism"/>
    <property type="evidence" value="ECO:0007669"/>
    <property type="project" value="Ensembl"/>
</dbReference>
<dbReference type="GO" id="GO:0006629">
    <property type="term" value="P:lipid metabolic process"/>
    <property type="evidence" value="ECO:0007669"/>
    <property type="project" value="Ensembl"/>
</dbReference>
<dbReference type="GO" id="GO:0001937">
    <property type="term" value="P:negative regulation of endothelial cell proliferation"/>
    <property type="evidence" value="ECO:0007669"/>
    <property type="project" value="Ensembl"/>
</dbReference>
<dbReference type="GO" id="GO:0043536">
    <property type="term" value="P:positive regulation of blood vessel endothelial cell migration"/>
    <property type="evidence" value="ECO:0007669"/>
    <property type="project" value="Ensembl"/>
</dbReference>
<dbReference type="GO" id="GO:0015986">
    <property type="term" value="P:proton motive force-driven ATP synthesis"/>
    <property type="evidence" value="ECO:0000250"/>
    <property type="project" value="UniProtKB"/>
</dbReference>
<dbReference type="GO" id="GO:0042776">
    <property type="term" value="P:proton motive force-driven mitochondrial ATP synthesis"/>
    <property type="evidence" value="ECO:0007669"/>
    <property type="project" value="Ensembl"/>
</dbReference>
<dbReference type="CDD" id="cd18113">
    <property type="entry name" value="ATP-synt_F1_alpha_C"/>
    <property type="match status" value="1"/>
</dbReference>
<dbReference type="CDD" id="cd18116">
    <property type="entry name" value="ATP-synt_F1_alpha_N"/>
    <property type="match status" value="1"/>
</dbReference>
<dbReference type="CDD" id="cd01132">
    <property type="entry name" value="F1-ATPase_alpha_CD"/>
    <property type="match status" value="1"/>
</dbReference>
<dbReference type="FunFam" id="1.20.150.20:FF:000001">
    <property type="entry name" value="ATP synthase subunit alpha"/>
    <property type="match status" value="1"/>
</dbReference>
<dbReference type="FunFam" id="2.40.30.20:FF:000001">
    <property type="entry name" value="ATP synthase subunit alpha"/>
    <property type="match status" value="1"/>
</dbReference>
<dbReference type="FunFam" id="3.40.50.300:FF:002432">
    <property type="entry name" value="ATP synthase subunit alpha, mitochondrial"/>
    <property type="match status" value="1"/>
</dbReference>
<dbReference type="Gene3D" id="2.40.30.20">
    <property type="match status" value="1"/>
</dbReference>
<dbReference type="Gene3D" id="1.20.150.20">
    <property type="entry name" value="ATP synthase alpha/beta chain, C-terminal domain"/>
    <property type="match status" value="1"/>
</dbReference>
<dbReference type="Gene3D" id="3.40.50.300">
    <property type="entry name" value="P-loop containing nucleotide triphosphate hydrolases"/>
    <property type="match status" value="1"/>
</dbReference>
<dbReference type="HAMAP" id="MF_01346">
    <property type="entry name" value="ATP_synth_alpha_bact"/>
    <property type="match status" value="1"/>
</dbReference>
<dbReference type="InterPro" id="IPR023366">
    <property type="entry name" value="ATP_synth_asu-like_sf"/>
</dbReference>
<dbReference type="InterPro" id="IPR000793">
    <property type="entry name" value="ATP_synth_asu_C"/>
</dbReference>
<dbReference type="InterPro" id="IPR038376">
    <property type="entry name" value="ATP_synth_asu_C_sf"/>
</dbReference>
<dbReference type="InterPro" id="IPR033732">
    <property type="entry name" value="ATP_synth_F1_a_nt-bd_dom"/>
</dbReference>
<dbReference type="InterPro" id="IPR005294">
    <property type="entry name" value="ATP_synth_F1_asu"/>
</dbReference>
<dbReference type="InterPro" id="IPR020003">
    <property type="entry name" value="ATPase_a/bsu_AS"/>
</dbReference>
<dbReference type="InterPro" id="IPR004100">
    <property type="entry name" value="ATPase_F1/V1/A1_a/bsu_N"/>
</dbReference>
<dbReference type="InterPro" id="IPR036121">
    <property type="entry name" value="ATPase_F1/V1/A1_a/bsu_N_sf"/>
</dbReference>
<dbReference type="InterPro" id="IPR000194">
    <property type="entry name" value="ATPase_F1/V1/A1_a/bsu_nucl-bd"/>
</dbReference>
<dbReference type="InterPro" id="IPR027417">
    <property type="entry name" value="P-loop_NTPase"/>
</dbReference>
<dbReference type="NCBIfam" id="TIGR00962">
    <property type="entry name" value="atpA"/>
    <property type="match status" value="1"/>
</dbReference>
<dbReference type="NCBIfam" id="NF009884">
    <property type="entry name" value="PRK13343.1"/>
    <property type="match status" value="1"/>
</dbReference>
<dbReference type="PANTHER" id="PTHR48082">
    <property type="entry name" value="ATP SYNTHASE SUBUNIT ALPHA, MITOCHONDRIAL"/>
    <property type="match status" value="1"/>
</dbReference>
<dbReference type="PANTHER" id="PTHR48082:SF2">
    <property type="entry name" value="ATP SYNTHASE SUBUNIT ALPHA, MITOCHONDRIAL"/>
    <property type="match status" value="1"/>
</dbReference>
<dbReference type="Pfam" id="PF00006">
    <property type="entry name" value="ATP-synt_ab"/>
    <property type="match status" value="1"/>
</dbReference>
<dbReference type="Pfam" id="PF00306">
    <property type="entry name" value="ATP-synt_ab_C"/>
    <property type="match status" value="1"/>
</dbReference>
<dbReference type="Pfam" id="PF02874">
    <property type="entry name" value="ATP-synt_ab_N"/>
    <property type="match status" value="1"/>
</dbReference>
<dbReference type="PIRSF" id="PIRSF039088">
    <property type="entry name" value="F_ATPase_subunit_alpha"/>
    <property type="match status" value="1"/>
</dbReference>
<dbReference type="SUPFAM" id="SSF47917">
    <property type="entry name" value="C-terminal domain of alpha and beta subunits of F1 ATP synthase"/>
    <property type="match status" value="1"/>
</dbReference>
<dbReference type="SUPFAM" id="SSF50615">
    <property type="entry name" value="N-terminal domain of alpha and beta subunits of F1 ATP synthase"/>
    <property type="match status" value="1"/>
</dbReference>
<dbReference type="SUPFAM" id="SSF52540">
    <property type="entry name" value="P-loop containing nucleoside triphosphate hydrolases"/>
    <property type="match status" value="1"/>
</dbReference>
<dbReference type="PROSITE" id="PS00152">
    <property type="entry name" value="ATPASE_ALPHA_BETA"/>
    <property type="match status" value="1"/>
</dbReference>
<keyword id="KW-0007">Acetylation</keyword>
<keyword id="KW-0066">ATP synthesis</keyword>
<keyword id="KW-0067">ATP-binding</keyword>
<keyword id="KW-1003">Cell membrane</keyword>
<keyword id="KW-0139">CF(1)</keyword>
<keyword id="KW-0325">Glycoprotein</keyword>
<keyword id="KW-0375">Hydrogen ion transport</keyword>
<keyword id="KW-0406">Ion transport</keyword>
<keyword id="KW-0460">Magnesium</keyword>
<keyword id="KW-0472">Membrane</keyword>
<keyword id="KW-0479">Metal-binding</keyword>
<keyword id="KW-0488">Methylation</keyword>
<keyword id="KW-0496">Mitochondrion</keyword>
<keyword id="KW-0999">Mitochondrion inner membrane</keyword>
<keyword id="KW-0547">Nucleotide-binding</keyword>
<keyword id="KW-0597">Phosphoprotein</keyword>
<keyword id="KW-1185">Reference proteome</keyword>
<keyword id="KW-0809">Transit peptide</keyword>
<keyword id="KW-0813">Transport</keyword>
<evidence type="ECO:0000250" key="1"/>
<evidence type="ECO:0000250" key="2">
    <source>
        <dbReference type="UniProtKB" id="P15999"/>
    </source>
</evidence>
<evidence type="ECO:0000250" key="3">
    <source>
        <dbReference type="UniProtKB" id="P19483"/>
    </source>
</evidence>
<evidence type="ECO:0000250" key="4">
    <source>
        <dbReference type="UniProtKB" id="P25705"/>
    </source>
</evidence>
<evidence type="ECO:0000250" key="5">
    <source>
        <dbReference type="UniProtKB" id="Q03265"/>
    </source>
</evidence>
<evidence type="ECO:0000305" key="6"/>
<comment type="function">
    <text evidence="3 4">Subunit alpha, of the mitochondrial membrane ATP synthase complex (F(1)F(0) ATP synthase or Complex V) that produces ATP from ADP in the presence of a proton gradient across the membrane which is generated by electron transport complexes of the respiratory chain. ATP synthase complex consist of a soluble F(1) head domain - the catalytic core - and a membrane F(1) domain - the membrane proton channel. These two domains are linked by a central stalk rotating inside the F(1) region and a stationary peripheral stalk. During catalysis, ATP synthesis in the catalytic domain of F(1) is coupled via a rotary mechanism of the central stalk subunits to proton translocation (By similarity). In vivo, can only synthesize ATP although its ATP hydrolase activity can be activated artificially in vitro (By similarity). With the catalytic subunit beta (ATP5F1B), forms the catalytic core in the F(1) domain. Subunit alpha does not bear the catalytic high-affinity ATP-binding sites (By similarity).</text>
</comment>
<comment type="subunit">
    <text evidence="2 4 5">Homotrimer. Component of the ATP synthase complex composed at least of ATP5F1A/subunit alpha, ATP5F1B/subunit beta, ATP5MC1/subunit c (homooctomer), MT-ATP6/subunit a, MT-ATP8/subunit 8, ATP5ME/subunit e, ATP5MF/subunit f, ATP5MG/subunit g, ATP5MK/subunit k, ATP5MJ/subunit j, ATP5F1C/subunit gamma, ATP5F1D/subunit delta, ATP5F1E/subunit epsilon, ATP5PF/subunit F6, ATP5PB/subunit b, ATP5PD/subunit d, ATP5PO/subunit OSCP. ATP synthase complex consists of a soluble F(1) head domain (subunits alpha(3) and beta(3)) - the catalytic core - and a membrane F(0) domain - the membrane proton channel (subunits c, a, 8, e, f, g, k and j). These two domains are linked by a central stalk (subunits gamma, delta, and epsilon) rotating inside the F1 region and a stationary peripheral stalk (subunits F6, b, d, and OSCP). Interacts with ATPAF2. Interacts with HRG; the interaction occurs on the surface of T-cells and alters the cell morphology when associated with concanavalin (in vitro). Interacts with PLG (angiostatin peptide); the interaction inhibits most of the angiogenic properties of angiostatin. Interacts with BLOC1S1 (By similarity). Interacts with BCL2L1 isoform BCL-X(L); the interaction mediates the association of BCL2L1 isoform BCL-X(L) with the mitochondrial membrane F(1)F(0) ATP synthase and enhances neurons metabolic efficiency (By similarity). Interacts with CLN5 and PPT1. Interacts with S100A1; this interaction increases F1-ATPase activity (By similarity). Interacts with ABCB7; this interaction allows the regulation of cellular iron homeostasis and cellular reactive oxygen species (ROS) levels in cardiomyocytes (By similarity).</text>
</comment>
<comment type="subcellular location">
    <subcellularLocation>
        <location evidence="3">Mitochondrion inner membrane</location>
        <topology evidence="3">Peripheral membrane protein</topology>
        <orientation evidence="3">Matrix side</orientation>
    </subcellularLocation>
    <subcellularLocation>
        <location evidence="4">Cell membrane</location>
        <topology evidence="4">Peripheral membrane protein</topology>
        <orientation evidence="4">Extracellular side</orientation>
    </subcellularLocation>
    <text evidence="4">Colocalizes with HRG on the cell surface of T-cells.</text>
</comment>
<comment type="PTM">
    <text evidence="4">Acetylated on lysine residues. BLOC1S1 is required for acetylation.</text>
</comment>
<comment type="miscellaneous">
    <text evidence="4">The siderophore enterobactin (Ent) produced by enteric bacteria binds Fe(3+) and helps bacteria scavenge iron ions from the environment. As a consequence, the mammalian siderocalin LCN2 plays an important role in defense against bacterial infections by sequestering iron bound to microbial siderophores. LCN2 can also bind iron bound to endogenous or nutrient-derived iron chelators and plays an important role in cellular iron homeostasis. Enterobactin produced by non-pathogenic E.coli strains can facilitate mitochondrial iron assimilation, suggesting that iron bound to siderophores from non-pathogenic bacteria may contribute to iron absorption by the host.</text>
</comment>
<comment type="similarity">
    <text evidence="6">Belongs to the ATPase alpha/beta chains family.</text>
</comment>
<feature type="transit peptide" description="Mitochondrion" evidence="3">
    <location>
        <begin position="1"/>
        <end position="43"/>
    </location>
</feature>
<feature type="chain" id="PRO_0000043404" description="ATP synthase F(1) complex subunit alpha, mitochondrial">
    <location>
        <begin position="44"/>
        <end position="553"/>
    </location>
</feature>
<feature type="binding site" evidence="4">
    <location>
        <position position="215"/>
    </location>
    <ligand>
        <name>ATP</name>
        <dbReference type="ChEBI" id="CHEBI:30616"/>
        <note>ligand shared between homotrimeric partners</note>
    </ligand>
</feature>
<feature type="binding site" evidence="4">
    <location>
        <position position="217"/>
    </location>
    <ligand>
        <name>ATP</name>
        <dbReference type="ChEBI" id="CHEBI:30616"/>
        <note>ligand shared between homotrimeric partners</note>
    </ligand>
</feature>
<feature type="binding site" evidence="4">
    <location>
        <position position="218"/>
    </location>
    <ligand>
        <name>ATP</name>
        <dbReference type="ChEBI" id="CHEBI:30616"/>
        <note>ligand shared between homotrimeric partners</note>
    </ligand>
</feature>
<feature type="binding site" evidence="4">
    <location>
        <position position="219"/>
    </location>
    <ligand>
        <name>ATP</name>
        <dbReference type="ChEBI" id="CHEBI:30616"/>
        <note>ligand shared between homotrimeric partners</note>
    </ligand>
</feature>
<feature type="binding site" evidence="4">
    <location>
        <position position="219"/>
    </location>
    <ligand>
        <name>Mg(2+)</name>
        <dbReference type="ChEBI" id="CHEBI:18420"/>
        <note>ligand shared between homotrimeric partners</note>
    </ligand>
</feature>
<feature type="binding site" evidence="4">
    <location>
        <position position="220"/>
    </location>
    <ligand>
        <name>ATP</name>
        <dbReference type="ChEBI" id="CHEBI:30616"/>
        <note>ligand shared between homotrimeric partners</note>
    </ligand>
</feature>
<feature type="binding site" evidence="4">
    <location>
        <position position="312"/>
    </location>
    <ligand>
        <name>Mg(2+)</name>
        <dbReference type="ChEBI" id="CHEBI:18420"/>
        <note>ligand shared between homotrimeric partners</note>
    </ligand>
</feature>
<feature type="binding site" evidence="4">
    <location>
        <position position="473"/>
    </location>
    <ligand>
        <name>ATP</name>
        <dbReference type="ChEBI" id="CHEBI:30616"/>
        <note>ligand shared between homotrimeric partners</note>
    </ligand>
</feature>
<feature type="binding site" evidence="4">
    <location>
        <position position="475"/>
    </location>
    <ligand>
        <name>ATP</name>
        <dbReference type="ChEBI" id="CHEBI:30616"/>
        <note>ligand shared between homotrimeric partners</note>
    </ligand>
</feature>
<feature type="site" description="Required for activity" evidence="1">
    <location>
        <position position="413"/>
    </location>
</feature>
<feature type="modified residue" description="Phosphoserine" evidence="4">
    <location>
        <position position="53"/>
    </location>
</feature>
<feature type="modified residue" description="Phosphoserine" evidence="4">
    <location>
        <position position="65"/>
    </location>
</feature>
<feature type="modified residue" description="Phosphoserine; alternate" evidence="4">
    <location>
        <position position="76"/>
    </location>
</feature>
<feature type="modified residue" description="Phosphoserine" evidence="5">
    <location>
        <position position="106"/>
    </location>
</feature>
<feature type="modified residue" description="N6-acetyllysine" evidence="5">
    <location>
        <position position="123"/>
    </location>
</feature>
<feature type="modified residue" description="N6-acetyllysine" evidence="5">
    <location>
        <position position="126"/>
    </location>
</feature>
<feature type="modified residue" description="N6-acetyllysine" evidence="5">
    <location>
        <position position="132"/>
    </location>
</feature>
<feature type="modified residue" description="Phosphothreonine" evidence="2">
    <location>
        <position position="134"/>
    </location>
</feature>
<feature type="modified residue" description="N6-acetyllysine; alternate" evidence="4">
    <location>
        <position position="161"/>
    </location>
</feature>
<feature type="modified residue" description="N6-succinyllysine; alternate" evidence="5">
    <location>
        <position position="161"/>
    </location>
</feature>
<feature type="modified residue" description="Phosphoserine" evidence="4">
    <location>
        <position position="166"/>
    </location>
</feature>
<feature type="modified residue" description="N6-acetyllysine; alternate" evidence="5">
    <location>
        <position position="167"/>
    </location>
</feature>
<feature type="modified residue" description="N6-succinyllysine; alternate" evidence="5">
    <location>
        <position position="167"/>
    </location>
</feature>
<feature type="modified residue" description="Phosphoserine" evidence="4">
    <location>
        <position position="184"/>
    </location>
</feature>
<feature type="modified residue" description="Omega-N-methylarginine" evidence="5">
    <location>
        <position position="204"/>
    </location>
</feature>
<feature type="modified residue" description="N6-acetyllysine; alternate" evidence="5">
    <location>
        <position position="230"/>
    </location>
</feature>
<feature type="modified residue" description="N6-succinyllysine; alternate" evidence="5">
    <location>
        <position position="230"/>
    </location>
</feature>
<feature type="modified residue" description="N6-acetyllysine; alternate" evidence="5">
    <location>
        <position position="239"/>
    </location>
</feature>
<feature type="modified residue" description="N6-succinyllysine; alternate" evidence="5">
    <location>
        <position position="239"/>
    </location>
</feature>
<feature type="modified residue" description="N6-acetyllysine" evidence="5">
    <location>
        <position position="240"/>
    </location>
</feature>
<feature type="modified residue" description="N6-acetyllysine; alternate" evidence="4">
    <location>
        <position position="261"/>
    </location>
</feature>
<feature type="modified residue" description="N6-succinyllysine; alternate" evidence="5">
    <location>
        <position position="261"/>
    </location>
</feature>
<feature type="modified residue" description="N6-acetyllysine; alternate" evidence="5">
    <location>
        <position position="305"/>
    </location>
</feature>
<feature type="modified residue" description="N6-succinyllysine; alternate" evidence="5">
    <location>
        <position position="305"/>
    </location>
</feature>
<feature type="modified residue" description="N6-acetyllysine; alternate" evidence="5">
    <location>
        <position position="427"/>
    </location>
</feature>
<feature type="modified residue" description="N6-succinyllysine; alternate" evidence="5">
    <location>
        <position position="427"/>
    </location>
</feature>
<feature type="modified residue" description="N6-acetyllysine" evidence="4">
    <location>
        <position position="434"/>
    </location>
</feature>
<feature type="modified residue" description="N6-acetyllysine; alternate" evidence="4">
    <location>
        <position position="498"/>
    </location>
</feature>
<feature type="modified residue" description="N6-succinyllysine; alternate" evidence="5">
    <location>
        <position position="498"/>
    </location>
</feature>
<feature type="modified residue" description="N6-acetyllysine; alternate" evidence="4">
    <location>
        <position position="506"/>
    </location>
</feature>
<feature type="modified residue" description="N6-succinyllysine; alternate" evidence="5">
    <location>
        <position position="506"/>
    </location>
</feature>
<feature type="modified residue" description="N6-acetyllysine; alternate" evidence="5">
    <location>
        <position position="531"/>
    </location>
</feature>
<feature type="modified residue" description="N6-succinyllysine; alternate" evidence="5">
    <location>
        <position position="531"/>
    </location>
</feature>
<feature type="modified residue" description="N6-acetyllysine; alternate" evidence="4">
    <location>
        <position position="539"/>
    </location>
</feature>
<feature type="modified residue" description="N6-succinyllysine; alternate" evidence="5">
    <location>
        <position position="539"/>
    </location>
</feature>
<feature type="modified residue" description="N6-acetyllysine" evidence="5">
    <location>
        <position position="541"/>
    </location>
</feature>
<feature type="glycosylation site" description="O-linked (GlcNAc) serine; alternate" evidence="1">
    <location>
        <position position="76"/>
    </location>
</feature>